<reference key="1">
    <citation type="journal article" date="2002" name="Proc. Natl. Acad. Sci. U.S.A.">
        <title>Complete genome sequence of Clostridium perfringens, an anaerobic flesh-eater.</title>
        <authorList>
            <person name="Shimizu T."/>
            <person name="Ohtani K."/>
            <person name="Hirakawa H."/>
            <person name="Ohshima K."/>
            <person name="Yamashita A."/>
            <person name="Shiba T."/>
            <person name="Ogasawara N."/>
            <person name="Hattori M."/>
            <person name="Kuhara S."/>
            <person name="Hayashi H."/>
        </authorList>
    </citation>
    <scope>NUCLEOTIDE SEQUENCE [LARGE SCALE GENOMIC DNA]</scope>
    <source>
        <strain>13 / Type A</strain>
    </source>
</reference>
<organism>
    <name type="scientific">Clostridium perfringens (strain 13 / Type A)</name>
    <dbReference type="NCBI Taxonomy" id="195102"/>
    <lineage>
        <taxon>Bacteria</taxon>
        <taxon>Bacillati</taxon>
        <taxon>Bacillota</taxon>
        <taxon>Clostridia</taxon>
        <taxon>Eubacteriales</taxon>
        <taxon>Clostridiaceae</taxon>
        <taxon>Clostridium</taxon>
    </lineage>
</organism>
<sequence length="171" mass="18990">MKIAIGCDHIVTDTKIAVSDFLKAKGYDVLDVGTYDFTRTHYPIFGKKVGEAVASGEADLGVCICGTGVGINNAVNKVPGIRSALVRDMTTAIYAKEQLNANVIGFGGKITGEFLMCDIIEAFIKADYIENEENKKIINKINSLEENKPEQNDIHFFDEFLERWNRGEYKD</sequence>
<comment type="catalytic activity">
    <reaction evidence="1">
        <text>aldehydo-D-galactose 6-phosphate = keto-D-tagatose 6-phosphate</text>
        <dbReference type="Rhea" id="RHEA:13033"/>
        <dbReference type="ChEBI" id="CHEBI:58255"/>
        <dbReference type="ChEBI" id="CHEBI:134283"/>
        <dbReference type="EC" id="5.3.1.26"/>
    </reaction>
</comment>
<comment type="pathway">
    <text evidence="1">Carbohydrate metabolism; D-galactose 6-phosphate degradation; D-tagatose 6-phosphate from D-galactose 6-phosphate: step 1/1.</text>
</comment>
<comment type="subunit">
    <text evidence="1">Heteromultimeric protein consisting of LacA and LacB.</text>
</comment>
<comment type="similarity">
    <text evidence="1">Belongs to the LacAB/RpiB family.</text>
</comment>
<name>LACB_CLOPE</name>
<accession>Q8XNK6</accession>
<gene>
    <name evidence="1" type="primary">lacB</name>
    <name type="ordered locus">CPE0327</name>
</gene>
<dbReference type="EC" id="5.3.1.26" evidence="1"/>
<dbReference type="EMBL" id="BA000016">
    <property type="protein sequence ID" value="BAB80033.1"/>
    <property type="molecule type" value="Genomic_DNA"/>
</dbReference>
<dbReference type="RefSeq" id="WP_011009743.1">
    <property type="nucleotide sequence ID" value="NC_003366.1"/>
</dbReference>
<dbReference type="SMR" id="Q8XNK6"/>
<dbReference type="STRING" id="195102.gene:10489583"/>
<dbReference type="GeneID" id="93003342"/>
<dbReference type="KEGG" id="cpe:CPE0327"/>
<dbReference type="HOGENOM" id="CLU_091396_2_0_9"/>
<dbReference type="UniPathway" id="UPA00702">
    <property type="reaction ID" value="UER00714"/>
</dbReference>
<dbReference type="Proteomes" id="UP000000818">
    <property type="component" value="Chromosome"/>
</dbReference>
<dbReference type="GO" id="GO:0050044">
    <property type="term" value="F:galactose-6-phosphate isomerase activity"/>
    <property type="evidence" value="ECO:0007669"/>
    <property type="project" value="UniProtKB-UniRule"/>
</dbReference>
<dbReference type="GO" id="GO:0004751">
    <property type="term" value="F:ribose-5-phosphate isomerase activity"/>
    <property type="evidence" value="ECO:0007669"/>
    <property type="project" value="TreeGrafter"/>
</dbReference>
<dbReference type="GO" id="GO:0019316">
    <property type="term" value="P:D-allose catabolic process"/>
    <property type="evidence" value="ECO:0007669"/>
    <property type="project" value="TreeGrafter"/>
</dbReference>
<dbReference type="GO" id="GO:0019388">
    <property type="term" value="P:galactose catabolic process"/>
    <property type="evidence" value="ECO:0007669"/>
    <property type="project" value="UniProtKB-UniPathway"/>
</dbReference>
<dbReference type="GO" id="GO:0019512">
    <property type="term" value="P:lactose catabolic process via tagatose-6-phosphate"/>
    <property type="evidence" value="ECO:0007669"/>
    <property type="project" value="UniProtKB-UniRule"/>
</dbReference>
<dbReference type="GO" id="GO:0009052">
    <property type="term" value="P:pentose-phosphate shunt, non-oxidative branch"/>
    <property type="evidence" value="ECO:0007669"/>
    <property type="project" value="TreeGrafter"/>
</dbReference>
<dbReference type="Gene3D" id="3.40.1400.10">
    <property type="entry name" value="Sugar-phosphate isomerase, RpiB/LacA/LacB"/>
    <property type="match status" value="1"/>
</dbReference>
<dbReference type="HAMAP" id="MF_01556">
    <property type="entry name" value="LacB"/>
    <property type="match status" value="1"/>
</dbReference>
<dbReference type="InterPro" id="IPR004784">
    <property type="entry name" value="LacB"/>
</dbReference>
<dbReference type="InterPro" id="IPR003500">
    <property type="entry name" value="RpiB_LacA_LacB"/>
</dbReference>
<dbReference type="InterPro" id="IPR036569">
    <property type="entry name" value="RpiB_LacA_LacB_sf"/>
</dbReference>
<dbReference type="NCBIfam" id="TIGR01119">
    <property type="entry name" value="lacB"/>
    <property type="match status" value="1"/>
</dbReference>
<dbReference type="NCBIfam" id="NF004051">
    <property type="entry name" value="PRK05571.1"/>
    <property type="match status" value="1"/>
</dbReference>
<dbReference type="NCBIfam" id="NF006381">
    <property type="entry name" value="PRK08622.1"/>
    <property type="match status" value="1"/>
</dbReference>
<dbReference type="NCBIfam" id="NF009258">
    <property type="entry name" value="PRK12615.1"/>
    <property type="match status" value="1"/>
</dbReference>
<dbReference type="NCBIfam" id="TIGR00689">
    <property type="entry name" value="rpiB_lacA_lacB"/>
    <property type="match status" value="1"/>
</dbReference>
<dbReference type="PANTHER" id="PTHR30345:SF0">
    <property type="entry name" value="DNA DAMAGE-REPAIR_TOLERATION PROTEIN DRT102"/>
    <property type="match status" value="1"/>
</dbReference>
<dbReference type="PANTHER" id="PTHR30345">
    <property type="entry name" value="RIBOSE-5-PHOSPHATE ISOMERASE B"/>
    <property type="match status" value="1"/>
</dbReference>
<dbReference type="Pfam" id="PF02502">
    <property type="entry name" value="LacAB_rpiB"/>
    <property type="match status" value="1"/>
</dbReference>
<dbReference type="PIRSF" id="PIRSF005384">
    <property type="entry name" value="RpiB_LacA_B"/>
    <property type="match status" value="1"/>
</dbReference>
<dbReference type="SUPFAM" id="SSF89623">
    <property type="entry name" value="Ribose/Galactose isomerase RpiB/AlsB"/>
    <property type="match status" value="1"/>
</dbReference>
<proteinExistence type="inferred from homology"/>
<feature type="chain" id="PRO_0000208133" description="Galactose-6-phosphate isomerase subunit LacB">
    <location>
        <begin position="1"/>
        <end position="171"/>
    </location>
</feature>
<evidence type="ECO:0000255" key="1">
    <source>
        <dbReference type="HAMAP-Rule" id="MF_01556"/>
    </source>
</evidence>
<keyword id="KW-0413">Isomerase</keyword>
<keyword id="KW-0423">Lactose metabolism</keyword>
<keyword id="KW-1185">Reference proteome</keyword>
<protein>
    <recommendedName>
        <fullName evidence="1">Galactose-6-phosphate isomerase subunit LacB</fullName>
        <ecNumber evidence="1">5.3.1.26</ecNumber>
    </recommendedName>
</protein>